<sequence length="377" mass="40420">MSNEGKPLQLTESKKIDAKSGEKEKALSLVVGQIERNFGKGSIMRLGDASKMRVETISTGALTLDLALGGGYPKGRVIEVYGPESSGKTTLTLHAIAEIQRNGGVAAFVDAEHALDPVYAASLGVDVENLLVSQPDTGEMALEIVDQLIRSAAVDLVVVDSVAALTPRSEIEGEMGDHSVGAQARLMSQAMRKITGNIGKSGCTVIFLNQLRLKIGITYGNPETTTGGNALKFYASVRLDIRRIQTLKRGTEEYGIRAKVKVAKNKVAPPFRIAEFDILFGKGISTLGCLLDLADETNVVTRKGAWYSYEGDNIGQGRDNTITWLEQNPESKEIIEKLVKEKLTEGSEVSANSMRPLASAARQASSRPNLSQVSANG</sequence>
<organism>
    <name type="scientific">Prochlorococcus marinus (strain NATL2A)</name>
    <dbReference type="NCBI Taxonomy" id="59920"/>
    <lineage>
        <taxon>Bacteria</taxon>
        <taxon>Bacillati</taxon>
        <taxon>Cyanobacteriota</taxon>
        <taxon>Cyanophyceae</taxon>
        <taxon>Synechococcales</taxon>
        <taxon>Prochlorococcaceae</taxon>
        <taxon>Prochlorococcus</taxon>
    </lineage>
</organism>
<comment type="function">
    <text evidence="1">Can catalyze the hydrolysis of ATP in the presence of single-stranded DNA, the ATP-dependent uptake of single-stranded DNA by duplex DNA, and the ATP-dependent hybridization of homologous single-stranded DNAs. It interacts with LexA causing its activation and leading to its autocatalytic cleavage.</text>
</comment>
<comment type="subcellular location">
    <subcellularLocation>
        <location evidence="1">Cytoplasm</location>
    </subcellularLocation>
</comment>
<comment type="similarity">
    <text evidence="1">Belongs to the RecA family.</text>
</comment>
<gene>
    <name evidence="1" type="primary">recA</name>
    <name type="ordered locus">PMN2A_1133</name>
</gene>
<proteinExistence type="inferred from homology"/>
<reference key="1">
    <citation type="journal article" date="2007" name="PLoS Genet.">
        <title>Patterns and implications of gene gain and loss in the evolution of Prochlorococcus.</title>
        <authorList>
            <person name="Kettler G.C."/>
            <person name="Martiny A.C."/>
            <person name="Huang K."/>
            <person name="Zucker J."/>
            <person name="Coleman M.L."/>
            <person name="Rodrigue S."/>
            <person name="Chen F."/>
            <person name="Lapidus A."/>
            <person name="Ferriera S."/>
            <person name="Johnson J."/>
            <person name="Steglich C."/>
            <person name="Church G.M."/>
            <person name="Richardson P."/>
            <person name="Chisholm S.W."/>
        </authorList>
    </citation>
    <scope>NUCLEOTIDE SEQUENCE [LARGE SCALE GENOMIC DNA]</scope>
    <source>
        <strain>NATL2A</strain>
    </source>
</reference>
<evidence type="ECO:0000255" key="1">
    <source>
        <dbReference type="HAMAP-Rule" id="MF_00268"/>
    </source>
</evidence>
<evidence type="ECO:0000256" key="2">
    <source>
        <dbReference type="SAM" id="MobiDB-lite"/>
    </source>
</evidence>
<feature type="chain" id="PRO_1000047965" description="Protein RecA">
    <location>
        <begin position="1"/>
        <end position="377"/>
    </location>
</feature>
<feature type="region of interest" description="Disordered" evidence="2">
    <location>
        <begin position="345"/>
        <end position="377"/>
    </location>
</feature>
<feature type="compositionally biased region" description="Polar residues" evidence="2">
    <location>
        <begin position="362"/>
        <end position="377"/>
    </location>
</feature>
<feature type="binding site" evidence="1">
    <location>
        <begin position="82"/>
        <end position="89"/>
    </location>
    <ligand>
        <name>ATP</name>
        <dbReference type="ChEBI" id="CHEBI:30616"/>
    </ligand>
</feature>
<protein>
    <recommendedName>
        <fullName evidence="1">Protein RecA</fullName>
    </recommendedName>
    <alternativeName>
        <fullName evidence="1">Recombinase A</fullName>
    </alternativeName>
</protein>
<name>RECA_PROMT</name>
<keyword id="KW-0067">ATP-binding</keyword>
<keyword id="KW-0963">Cytoplasm</keyword>
<keyword id="KW-0227">DNA damage</keyword>
<keyword id="KW-0233">DNA recombination</keyword>
<keyword id="KW-0234">DNA repair</keyword>
<keyword id="KW-0238">DNA-binding</keyword>
<keyword id="KW-0547">Nucleotide-binding</keyword>
<keyword id="KW-1185">Reference proteome</keyword>
<keyword id="KW-0742">SOS response</keyword>
<dbReference type="EMBL" id="CP000095">
    <property type="protein sequence ID" value="AAZ58623.1"/>
    <property type="molecule type" value="Genomic_DNA"/>
</dbReference>
<dbReference type="RefSeq" id="WP_011295477.1">
    <property type="nucleotide sequence ID" value="NC_007335.2"/>
</dbReference>
<dbReference type="SMR" id="Q46IQ5"/>
<dbReference type="STRING" id="59920.PMN2A_1133"/>
<dbReference type="KEGG" id="pmn:PMN2A_1133"/>
<dbReference type="HOGENOM" id="CLU_040469_3_2_3"/>
<dbReference type="OrthoDB" id="9776733at2"/>
<dbReference type="PhylomeDB" id="Q46IQ5"/>
<dbReference type="Proteomes" id="UP000002535">
    <property type="component" value="Chromosome"/>
</dbReference>
<dbReference type="GO" id="GO:0005829">
    <property type="term" value="C:cytosol"/>
    <property type="evidence" value="ECO:0007669"/>
    <property type="project" value="TreeGrafter"/>
</dbReference>
<dbReference type="GO" id="GO:0005524">
    <property type="term" value="F:ATP binding"/>
    <property type="evidence" value="ECO:0007669"/>
    <property type="project" value="UniProtKB-UniRule"/>
</dbReference>
<dbReference type="GO" id="GO:0016887">
    <property type="term" value="F:ATP hydrolysis activity"/>
    <property type="evidence" value="ECO:0007669"/>
    <property type="project" value="InterPro"/>
</dbReference>
<dbReference type="GO" id="GO:0140664">
    <property type="term" value="F:ATP-dependent DNA damage sensor activity"/>
    <property type="evidence" value="ECO:0007669"/>
    <property type="project" value="InterPro"/>
</dbReference>
<dbReference type="GO" id="GO:0003684">
    <property type="term" value="F:damaged DNA binding"/>
    <property type="evidence" value="ECO:0007669"/>
    <property type="project" value="UniProtKB-UniRule"/>
</dbReference>
<dbReference type="GO" id="GO:0003697">
    <property type="term" value="F:single-stranded DNA binding"/>
    <property type="evidence" value="ECO:0007669"/>
    <property type="project" value="UniProtKB-UniRule"/>
</dbReference>
<dbReference type="GO" id="GO:0006310">
    <property type="term" value="P:DNA recombination"/>
    <property type="evidence" value="ECO:0007669"/>
    <property type="project" value="UniProtKB-UniRule"/>
</dbReference>
<dbReference type="GO" id="GO:0006281">
    <property type="term" value="P:DNA repair"/>
    <property type="evidence" value="ECO:0007669"/>
    <property type="project" value="UniProtKB-UniRule"/>
</dbReference>
<dbReference type="GO" id="GO:0009432">
    <property type="term" value="P:SOS response"/>
    <property type="evidence" value="ECO:0007669"/>
    <property type="project" value="UniProtKB-UniRule"/>
</dbReference>
<dbReference type="CDD" id="cd00983">
    <property type="entry name" value="RecA"/>
    <property type="match status" value="1"/>
</dbReference>
<dbReference type="FunFam" id="3.40.50.300:FF:000087">
    <property type="entry name" value="Recombinase RecA"/>
    <property type="match status" value="1"/>
</dbReference>
<dbReference type="Gene3D" id="3.40.50.300">
    <property type="entry name" value="P-loop containing nucleotide triphosphate hydrolases"/>
    <property type="match status" value="1"/>
</dbReference>
<dbReference type="HAMAP" id="MF_00268">
    <property type="entry name" value="RecA"/>
    <property type="match status" value="1"/>
</dbReference>
<dbReference type="InterPro" id="IPR003593">
    <property type="entry name" value="AAA+_ATPase"/>
</dbReference>
<dbReference type="InterPro" id="IPR013765">
    <property type="entry name" value="DNA_recomb/repair_RecA"/>
</dbReference>
<dbReference type="InterPro" id="IPR020584">
    <property type="entry name" value="DNA_recomb/repair_RecA_CS"/>
</dbReference>
<dbReference type="InterPro" id="IPR027417">
    <property type="entry name" value="P-loop_NTPase"/>
</dbReference>
<dbReference type="InterPro" id="IPR049261">
    <property type="entry name" value="RecA-like_C"/>
</dbReference>
<dbReference type="InterPro" id="IPR049428">
    <property type="entry name" value="RecA-like_N"/>
</dbReference>
<dbReference type="InterPro" id="IPR020588">
    <property type="entry name" value="RecA_ATP-bd"/>
</dbReference>
<dbReference type="InterPro" id="IPR023400">
    <property type="entry name" value="RecA_C_sf"/>
</dbReference>
<dbReference type="InterPro" id="IPR020587">
    <property type="entry name" value="RecA_monomer-monomer_interface"/>
</dbReference>
<dbReference type="NCBIfam" id="TIGR02012">
    <property type="entry name" value="tigrfam_recA"/>
    <property type="match status" value="1"/>
</dbReference>
<dbReference type="PANTHER" id="PTHR45900:SF1">
    <property type="entry name" value="MITOCHONDRIAL DNA REPAIR PROTEIN RECA HOMOLOG-RELATED"/>
    <property type="match status" value="1"/>
</dbReference>
<dbReference type="PANTHER" id="PTHR45900">
    <property type="entry name" value="RECA"/>
    <property type="match status" value="1"/>
</dbReference>
<dbReference type="Pfam" id="PF00154">
    <property type="entry name" value="RecA"/>
    <property type="match status" value="1"/>
</dbReference>
<dbReference type="Pfam" id="PF21096">
    <property type="entry name" value="RecA_C"/>
    <property type="match status" value="1"/>
</dbReference>
<dbReference type="PRINTS" id="PR00142">
    <property type="entry name" value="RECA"/>
</dbReference>
<dbReference type="SMART" id="SM00382">
    <property type="entry name" value="AAA"/>
    <property type="match status" value="1"/>
</dbReference>
<dbReference type="SUPFAM" id="SSF52540">
    <property type="entry name" value="P-loop containing nucleoside triphosphate hydrolases"/>
    <property type="match status" value="1"/>
</dbReference>
<dbReference type="SUPFAM" id="SSF54752">
    <property type="entry name" value="RecA protein, C-terminal domain"/>
    <property type="match status" value="1"/>
</dbReference>
<dbReference type="PROSITE" id="PS00321">
    <property type="entry name" value="RECA_1"/>
    <property type="match status" value="1"/>
</dbReference>
<dbReference type="PROSITE" id="PS50162">
    <property type="entry name" value="RECA_2"/>
    <property type="match status" value="1"/>
</dbReference>
<dbReference type="PROSITE" id="PS50163">
    <property type="entry name" value="RECA_3"/>
    <property type="match status" value="1"/>
</dbReference>
<accession>Q46IQ5</accession>